<gene>
    <name evidence="1" type="primary">leuS</name>
    <name type="ordered locus">MA_1611</name>
</gene>
<comment type="catalytic activity">
    <reaction evidence="1">
        <text>tRNA(Leu) + L-leucine + ATP = L-leucyl-tRNA(Leu) + AMP + diphosphate</text>
        <dbReference type="Rhea" id="RHEA:11688"/>
        <dbReference type="Rhea" id="RHEA-COMP:9613"/>
        <dbReference type="Rhea" id="RHEA-COMP:9622"/>
        <dbReference type="ChEBI" id="CHEBI:30616"/>
        <dbReference type="ChEBI" id="CHEBI:33019"/>
        <dbReference type="ChEBI" id="CHEBI:57427"/>
        <dbReference type="ChEBI" id="CHEBI:78442"/>
        <dbReference type="ChEBI" id="CHEBI:78494"/>
        <dbReference type="ChEBI" id="CHEBI:456215"/>
        <dbReference type="EC" id="6.1.1.4"/>
    </reaction>
</comment>
<comment type="subcellular location">
    <subcellularLocation>
        <location evidence="1">Cytoplasm</location>
    </subcellularLocation>
</comment>
<comment type="similarity">
    <text evidence="1">Belongs to the class-I aminoacyl-tRNA synthetase family.</text>
</comment>
<keyword id="KW-0030">Aminoacyl-tRNA synthetase</keyword>
<keyword id="KW-0067">ATP-binding</keyword>
<keyword id="KW-0963">Cytoplasm</keyword>
<keyword id="KW-0436">Ligase</keyword>
<keyword id="KW-0547">Nucleotide-binding</keyword>
<keyword id="KW-0648">Protein biosynthesis</keyword>
<keyword id="KW-1185">Reference proteome</keyword>
<dbReference type="EC" id="6.1.1.4" evidence="1"/>
<dbReference type="EMBL" id="AE010299">
    <property type="protein sequence ID" value="AAM05024.1"/>
    <property type="molecule type" value="Genomic_DNA"/>
</dbReference>
<dbReference type="RefSeq" id="WP_011021621.1">
    <property type="nucleotide sequence ID" value="NC_003552.1"/>
</dbReference>
<dbReference type="SMR" id="Q8TQD3"/>
<dbReference type="FunCoup" id="Q8TQD3">
    <property type="interactions" value="214"/>
</dbReference>
<dbReference type="STRING" id="188937.MA_1611"/>
<dbReference type="EnsemblBacteria" id="AAM05024">
    <property type="protein sequence ID" value="AAM05024"/>
    <property type="gene ID" value="MA_1611"/>
</dbReference>
<dbReference type="GeneID" id="1473499"/>
<dbReference type="KEGG" id="mac:MA_1611"/>
<dbReference type="HOGENOM" id="CLU_004174_0_0_2"/>
<dbReference type="InParanoid" id="Q8TQD3"/>
<dbReference type="OrthoDB" id="23906at2157"/>
<dbReference type="PhylomeDB" id="Q8TQD3"/>
<dbReference type="Proteomes" id="UP000002487">
    <property type="component" value="Chromosome"/>
</dbReference>
<dbReference type="GO" id="GO:0005737">
    <property type="term" value="C:cytoplasm"/>
    <property type="evidence" value="ECO:0007669"/>
    <property type="project" value="UniProtKB-SubCell"/>
</dbReference>
<dbReference type="GO" id="GO:0002161">
    <property type="term" value="F:aminoacyl-tRNA deacylase activity"/>
    <property type="evidence" value="ECO:0007669"/>
    <property type="project" value="InterPro"/>
</dbReference>
<dbReference type="GO" id="GO:0005524">
    <property type="term" value="F:ATP binding"/>
    <property type="evidence" value="ECO:0007669"/>
    <property type="project" value="UniProtKB-UniRule"/>
</dbReference>
<dbReference type="GO" id="GO:0004823">
    <property type="term" value="F:leucine-tRNA ligase activity"/>
    <property type="evidence" value="ECO:0000318"/>
    <property type="project" value="GO_Central"/>
</dbReference>
<dbReference type="GO" id="GO:0006429">
    <property type="term" value="P:leucyl-tRNA aminoacylation"/>
    <property type="evidence" value="ECO:0000318"/>
    <property type="project" value="GO_Central"/>
</dbReference>
<dbReference type="CDD" id="cd07959">
    <property type="entry name" value="Anticodon_Ia_Leu_AEc"/>
    <property type="match status" value="1"/>
</dbReference>
<dbReference type="FunFam" id="1.10.730.10:FF:000051">
    <property type="entry name" value="Leucine--tRNA ligase"/>
    <property type="match status" value="1"/>
</dbReference>
<dbReference type="FunFam" id="3.90.740.10:FF:000024">
    <property type="entry name" value="Leucine--tRNA ligase"/>
    <property type="match status" value="1"/>
</dbReference>
<dbReference type="Gene3D" id="3.30.2320.20">
    <property type="entry name" value="Class I aminoacyl-tRNA synthetases (RS)"/>
    <property type="match status" value="1"/>
</dbReference>
<dbReference type="Gene3D" id="3.40.50.620">
    <property type="entry name" value="HUPs"/>
    <property type="match status" value="1"/>
</dbReference>
<dbReference type="Gene3D" id="1.10.730.10">
    <property type="entry name" value="Isoleucyl-tRNA Synthetase, Domain 1"/>
    <property type="match status" value="1"/>
</dbReference>
<dbReference type="Gene3D" id="1.10.10.720">
    <property type="entry name" value="leucyl-tRNA synthetase"/>
    <property type="match status" value="1"/>
</dbReference>
<dbReference type="Gene3D" id="3.90.740.10">
    <property type="entry name" value="Valyl/Leucyl/Isoleucyl-tRNA synthetase, editing domain"/>
    <property type="match status" value="1"/>
</dbReference>
<dbReference type="HAMAP" id="MF_00049_A">
    <property type="entry name" value="Leu_tRNA_synth_A"/>
    <property type="match status" value="1"/>
</dbReference>
<dbReference type="InterPro" id="IPR001412">
    <property type="entry name" value="aa-tRNA-synth_I_CS"/>
</dbReference>
<dbReference type="InterPro" id="IPR002300">
    <property type="entry name" value="aa-tRNA-synth_Ia"/>
</dbReference>
<dbReference type="InterPro" id="IPR020791">
    <property type="entry name" value="Leu-tRNA-lgase_arc"/>
</dbReference>
<dbReference type="InterPro" id="IPR004493">
    <property type="entry name" value="Leu-tRNA-synth_Ia_arc/euk"/>
</dbReference>
<dbReference type="InterPro" id="IPR013155">
    <property type="entry name" value="M/V/L/I-tRNA-synth_anticd-bd"/>
</dbReference>
<dbReference type="InterPro" id="IPR014729">
    <property type="entry name" value="Rossmann-like_a/b/a_fold"/>
</dbReference>
<dbReference type="InterPro" id="IPR009080">
    <property type="entry name" value="tRNAsynth_Ia_anticodon-bd"/>
</dbReference>
<dbReference type="InterPro" id="IPR009008">
    <property type="entry name" value="Val/Leu/Ile-tRNA-synth_edit"/>
</dbReference>
<dbReference type="NCBIfam" id="TIGR00395">
    <property type="entry name" value="leuS_arch"/>
    <property type="match status" value="1"/>
</dbReference>
<dbReference type="NCBIfam" id="NF008957">
    <property type="entry name" value="PRK12300.1"/>
    <property type="match status" value="1"/>
</dbReference>
<dbReference type="PANTHER" id="PTHR45794:SF1">
    <property type="entry name" value="LEUCINE--TRNA LIGASE, CYTOPLASMIC"/>
    <property type="match status" value="1"/>
</dbReference>
<dbReference type="PANTHER" id="PTHR45794">
    <property type="entry name" value="LEUCYL-TRNA SYNTHETASE"/>
    <property type="match status" value="1"/>
</dbReference>
<dbReference type="Pfam" id="PF08264">
    <property type="entry name" value="Anticodon_1"/>
    <property type="match status" value="1"/>
</dbReference>
<dbReference type="Pfam" id="PF00133">
    <property type="entry name" value="tRNA-synt_1"/>
    <property type="match status" value="1"/>
</dbReference>
<dbReference type="SUPFAM" id="SSF47323">
    <property type="entry name" value="Anticodon-binding domain of a subclass of class I aminoacyl-tRNA synthetases"/>
    <property type="match status" value="1"/>
</dbReference>
<dbReference type="SUPFAM" id="SSF52374">
    <property type="entry name" value="Nucleotidylyl transferase"/>
    <property type="match status" value="1"/>
</dbReference>
<dbReference type="SUPFAM" id="SSF50677">
    <property type="entry name" value="ValRS/IleRS/LeuRS editing domain"/>
    <property type="match status" value="1"/>
</dbReference>
<dbReference type="PROSITE" id="PS00178">
    <property type="entry name" value="AA_TRNA_LIGASE_I"/>
    <property type="match status" value="1"/>
</dbReference>
<reference key="1">
    <citation type="journal article" date="2002" name="Genome Res.">
        <title>The genome of Methanosarcina acetivorans reveals extensive metabolic and physiological diversity.</title>
        <authorList>
            <person name="Galagan J.E."/>
            <person name="Nusbaum C."/>
            <person name="Roy A."/>
            <person name="Endrizzi M.G."/>
            <person name="Macdonald P."/>
            <person name="FitzHugh W."/>
            <person name="Calvo S."/>
            <person name="Engels R."/>
            <person name="Smirnov S."/>
            <person name="Atnoor D."/>
            <person name="Brown A."/>
            <person name="Allen N."/>
            <person name="Naylor J."/>
            <person name="Stange-Thomann N."/>
            <person name="DeArellano K."/>
            <person name="Johnson R."/>
            <person name="Linton L."/>
            <person name="McEwan P."/>
            <person name="McKernan K."/>
            <person name="Talamas J."/>
            <person name="Tirrell A."/>
            <person name="Ye W."/>
            <person name="Zimmer A."/>
            <person name="Barber R.D."/>
            <person name="Cann I."/>
            <person name="Graham D.E."/>
            <person name="Grahame D.A."/>
            <person name="Guss A.M."/>
            <person name="Hedderich R."/>
            <person name="Ingram-Smith C."/>
            <person name="Kuettner H.C."/>
            <person name="Krzycki J.A."/>
            <person name="Leigh J.A."/>
            <person name="Li W."/>
            <person name="Liu J."/>
            <person name="Mukhopadhyay B."/>
            <person name="Reeve J.N."/>
            <person name="Smith K."/>
            <person name="Springer T.A."/>
            <person name="Umayam L.A."/>
            <person name="White O."/>
            <person name="White R.H."/>
            <person name="de Macario E.C."/>
            <person name="Ferry J.G."/>
            <person name="Jarrell K.F."/>
            <person name="Jing H."/>
            <person name="Macario A.J.L."/>
            <person name="Paulsen I.T."/>
            <person name="Pritchett M."/>
            <person name="Sowers K.R."/>
            <person name="Swanson R.V."/>
            <person name="Zinder S.H."/>
            <person name="Lander E."/>
            <person name="Metcalf W.W."/>
            <person name="Birren B."/>
        </authorList>
    </citation>
    <scope>NUCLEOTIDE SEQUENCE [LARGE SCALE GENOMIC DNA]</scope>
    <source>
        <strain>ATCC 35395 / DSM 2834 / JCM 12185 / C2A</strain>
    </source>
</reference>
<sequence length="961" mass="110402">MEQDYKPHEIEEKWQKKWNESLIFQADPDKREKFFITIPYPYLNGNLHAGHTRTFTIGDVVARHKRMLGYNVLYPMGFHVTGTPIVGLAELIASRDPQTMDVYEHLHGIPGDILPTLDTPEKIVDYFKREAEKAMRMIGYSIDWRRKFTTTDPTYKKFIEWQYIRLEEKGLIVKGSHPVKWCPNDNNPVEDHDILYGEEATIVEYTLIKFRYNDLVLPCATLRPETTFGVTNLWVNPDVDYVKARVEKDGNEEFWVVSKEAFRKLTFTDRTVEYVEDVPAKSIIGIKLTNPITGDEVISLPASFVKPENGSGIVMSVPAHAPFDYLALRDLYDADLSEYGITEDLRDIKLISLIQVPEFGEFPAKEIVESMGIANQKAPKAEEATKIVYRREFHGGVLKEITGKYRGYPVSKIKDVLTRDLIASNAGETFYEFSEPVVCRCGTPCVVNMVKGQWFLNYSNPEWKAKVYKCLSQMRIIPEEYRVEFENKVDWLKDKACARRKGLGTRLPFDKEWLIESLGDSTIYMSYYIIARFLERGDLALEQLTLSFFDYVLLGIGDSAAVSAETGLKQELVEEIRSHFNYWYPVDLRSSGKDLVPNHLLFFLFHHVALFEEEKWPRALAVNGFVSLEGQKMSKSKGPILTLESAVSAYGADITRMYILSTAEQTQDADWQKTGIDSARRQVDRFYSFAKDVIESGKRATLSTELKLIDRWMLSRMQKYIMETNIALDSIQTREAIQNSFFLLINDVRWYQRRGGEALLYYVLDNWVRLMAPFTPHLCEEIWEAMGHEDPISLAQYPLDNEDLIDEGAELAEEAVKSTLNDIEEIVRVTKMTPQKVYLYTAPAWKAEAIRCACELQIEAPLEVGALIKTLMANPELKRFGKEIPKFVQKIIPEFKSGGAERYETFAYLGLDEQALLKESASFLEKEIGCPVEIYSADSPEYDPQKKSRFAEPLRPAIYIE</sequence>
<name>SYL_METAC</name>
<accession>Q8TQD3</accession>
<organism>
    <name type="scientific">Methanosarcina acetivorans (strain ATCC 35395 / DSM 2834 / JCM 12185 / C2A)</name>
    <dbReference type="NCBI Taxonomy" id="188937"/>
    <lineage>
        <taxon>Archaea</taxon>
        <taxon>Methanobacteriati</taxon>
        <taxon>Methanobacteriota</taxon>
        <taxon>Stenosarchaea group</taxon>
        <taxon>Methanomicrobia</taxon>
        <taxon>Methanosarcinales</taxon>
        <taxon>Methanosarcinaceae</taxon>
        <taxon>Methanosarcina</taxon>
    </lineage>
</organism>
<evidence type="ECO:0000255" key="1">
    <source>
        <dbReference type="HAMAP-Rule" id="MF_00049"/>
    </source>
</evidence>
<proteinExistence type="inferred from homology"/>
<feature type="chain" id="PRO_0000152130" description="Leucine--tRNA ligase">
    <location>
        <begin position="1"/>
        <end position="961"/>
    </location>
</feature>
<feature type="short sequence motif" description="'HIGH' region">
    <location>
        <begin position="41"/>
        <end position="51"/>
    </location>
</feature>
<feature type="short sequence motif" description="'KMSKS' region">
    <location>
        <begin position="632"/>
        <end position="636"/>
    </location>
</feature>
<feature type="binding site" evidence="1">
    <location>
        <position position="635"/>
    </location>
    <ligand>
        <name>ATP</name>
        <dbReference type="ChEBI" id="CHEBI:30616"/>
    </ligand>
</feature>
<protein>
    <recommendedName>
        <fullName evidence="1">Leucine--tRNA ligase</fullName>
        <ecNumber evidence="1">6.1.1.4</ecNumber>
    </recommendedName>
    <alternativeName>
        <fullName evidence="1">Leucyl-tRNA synthetase</fullName>
        <shortName evidence="1">LeuRS</shortName>
    </alternativeName>
</protein>